<dbReference type="EC" id="6.1.1.3" evidence="1"/>
<dbReference type="EMBL" id="BX571965">
    <property type="protein sequence ID" value="CAH35944.1"/>
    <property type="molecule type" value="Genomic_DNA"/>
</dbReference>
<dbReference type="RefSeq" id="WP_004191232.1">
    <property type="nucleotide sequence ID" value="NZ_CP009538.1"/>
</dbReference>
<dbReference type="RefSeq" id="YP_108544.1">
    <property type="nucleotide sequence ID" value="NC_006350.1"/>
</dbReference>
<dbReference type="SMR" id="Q63TM2"/>
<dbReference type="STRING" id="272560.BPSL1945"/>
<dbReference type="GeneID" id="93060046"/>
<dbReference type="KEGG" id="bps:BPSL1945"/>
<dbReference type="PATRIC" id="fig|272560.51.peg.4089"/>
<dbReference type="eggNOG" id="COG0441">
    <property type="taxonomic scope" value="Bacteria"/>
</dbReference>
<dbReference type="Proteomes" id="UP000000605">
    <property type="component" value="Chromosome 1"/>
</dbReference>
<dbReference type="GO" id="GO:0005829">
    <property type="term" value="C:cytosol"/>
    <property type="evidence" value="ECO:0007669"/>
    <property type="project" value="TreeGrafter"/>
</dbReference>
<dbReference type="GO" id="GO:0005524">
    <property type="term" value="F:ATP binding"/>
    <property type="evidence" value="ECO:0007669"/>
    <property type="project" value="UniProtKB-UniRule"/>
</dbReference>
<dbReference type="GO" id="GO:0046872">
    <property type="term" value="F:metal ion binding"/>
    <property type="evidence" value="ECO:0007669"/>
    <property type="project" value="UniProtKB-KW"/>
</dbReference>
<dbReference type="GO" id="GO:0004829">
    <property type="term" value="F:threonine-tRNA ligase activity"/>
    <property type="evidence" value="ECO:0007669"/>
    <property type="project" value="UniProtKB-UniRule"/>
</dbReference>
<dbReference type="GO" id="GO:0000049">
    <property type="term" value="F:tRNA binding"/>
    <property type="evidence" value="ECO:0007669"/>
    <property type="project" value="UniProtKB-KW"/>
</dbReference>
<dbReference type="GO" id="GO:0006435">
    <property type="term" value="P:threonyl-tRNA aminoacylation"/>
    <property type="evidence" value="ECO:0007669"/>
    <property type="project" value="UniProtKB-UniRule"/>
</dbReference>
<dbReference type="CDD" id="cd01667">
    <property type="entry name" value="TGS_ThrRS"/>
    <property type="match status" value="1"/>
</dbReference>
<dbReference type="CDD" id="cd00860">
    <property type="entry name" value="ThrRS_anticodon"/>
    <property type="match status" value="1"/>
</dbReference>
<dbReference type="CDD" id="cd00771">
    <property type="entry name" value="ThrRS_core"/>
    <property type="match status" value="1"/>
</dbReference>
<dbReference type="FunFam" id="3.10.20.30:FF:000005">
    <property type="entry name" value="Threonine--tRNA ligase"/>
    <property type="match status" value="1"/>
</dbReference>
<dbReference type="FunFam" id="3.30.54.20:FF:000002">
    <property type="entry name" value="Threonine--tRNA ligase"/>
    <property type="match status" value="1"/>
</dbReference>
<dbReference type="FunFam" id="3.30.930.10:FF:000002">
    <property type="entry name" value="Threonine--tRNA ligase"/>
    <property type="match status" value="1"/>
</dbReference>
<dbReference type="FunFam" id="3.40.50.800:FF:000001">
    <property type="entry name" value="Threonine--tRNA ligase"/>
    <property type="match status" value="1"/>
</dbReference>
<dbReference type="FunFam" id="3.30.980.10:FF:000005">
    <property type="entry name" value="Threonyl-tRNA synthetase, mitochondrial"/>
    <property type="match status" value="1"/>
</dbReference>
<dbReference type="Gene3D" id="3.10.20.30">
    <property type="match status" value="1"/>
</dbReference>
<dbReference type="Gene3D" id="3.30.54.20">
    <property type="match status" value="1"/>
</dbReference>
<dbReference type="Gene3D" id="3.40.50.800">
    <property type="entry name" value="Anticodon-binding domain"/>
    <property type="match status" value="1"/>
</dbReference>
<dbReference type="Gene3D" id="3.30.930.10">
    <property type="entry name" value="Bira Bifunctional Protein, Domain 2"/>
    <property type="match status" value="1"/>
</dbReference>
<dbReference type="Gene3D" id="3.30.980.10">
    <property type="entry name" value="Threonyl-trna Synthetase, Chain A, domain 2"/>
    <property type="match status" value="1"/>
</dbReference>
<dbReference type="HAMAP" id="MF_00184">
    <property type="entry name" value="Thr_tRNA_synth"/>
    <property type="match status" value="1"/>
</dbReference>
<dbReference type="InterPro" id="IPR002314">
    <property type="entry name" value="aa-tRNA-synt_IIb"/>
</dbReference>
<dbReference type="InterPro" id="IPR006195">
    <property type="entry name" value="aa-tRNA-synth_II"/>
</dbReference>
<dbReference type="InterPro" id="IPR045864">
    <property type="entry name" value="aa-tRNA-synth_II/BPL/LPL"/>
</dbReference>
<dbReference type="InterPro" id="IPR004154">
    <property type="entry name" value="Anticodon-bd"/>
</dbReference>
<dbReference type="InterPro" id="IPR036621">
    <property type="entry name" value="Anticodon-bd_dom_sf"/>
</dbReference>
<dbReference type="InterPro" id="IPR012675">
    <property type="entry name" value="Beta-grasp_dom_sf"/>
</dbReference>
<dbReference type="InterPro" id="IPR004095">
    <property type="entry name" value="TGS"/>
</dbReference>
<dbReference type="InterPro" id="IPR012676">
    <property type="entry name" value="TGS-like"/>
</dbReference>
<dbReference type="InterPro" id="IPR002320">
    <property type="entry name" value="Thr-tRNA-ligase_IIa"/>
</dbReference>
<dbReference type="InterPro" id="IPR018163">
    <property type="entry name" value="Thr/Ala-tRNA-synth_IIc_edit"/>
</dbReference>
<dbReference type="InterPro" id="IPR047246">
    <property type="entry name" value="ThrRS_anticodon"/>
</dbReference>
<dbReference type="InterPro" id="IPR033728">
    <property type="entry name" value="ThrRS_core"/>
</dbReference>
<dbReference type="InterPro" id="IPR012947">
    <property type="entry name" value="tRNA_SAD"/>
</dbReference>
<dbReference type="NCBIfam" id="TIGR00418">
    <property type="entry name" value="thrS"/>
    <property type="match status" value="1"/>
</dbReference>
<dbReference type="PANTHER" id="PTHR11451:SF44">
    <property type="entry name" value="THREONINE--TRNA LIGASE, CHLOROPLASTIC_MITOCHONDRIAL 2"/>
    <property type="match status" value="1"/>
</dbReference>
<dbReference type="PANTHER" id="PTHR11451">
    <property type="entry name" value="THREONINE-TRNA LIGASE"/>
    <property type="match status" value="1"/>
</dbReference>
<dbReference type="Pfam" id="PF03129">
    <property type="entry name" value="HGTP_anticodon"/>
    <property type="match status" value="1"/>
</dbReference>
<dbReference type="Pfam" id="PF02824">
    <property type="entry name" value="TGS"/>
    <property type="match status" value="1"/>
</dbReference>
<dbReference type="Pfam" id="PF00587">
    <property type="entry name" value="tRNA-synt_2b"/>
    <property type="match status" value="1"/>
</dbReference>
<dbReference type="Pfam" id="PF07973">
    <property type="entry name" value="tRNA_SAD"/>
    <property type="match status" value="1"/>
</dbReference>
<dbReference type="PRINTS" id="PR01047">
    <property type="entry name" value="TRNASYNTHTHR"/>
</dbReference>
<dbReference type="SMART" id="SM00863">
    <property type="entry name" value="tRNA_SAD"/>
    <property type="match status" value="1"/>
</dbReference>
<dbReference type="SUPFAM" id="SSF52954">
    <property type="entry name" value="Class II aaRS ABD-related"/>
    <property type="match status" value="1"/>
</dbReference>
<dbReference type="SUPFAM" id="SSF55681">
    <property type="entry name" value="Class II aaRS and biotin synthetases"/>
    <property type="match status" value="1"/>
</dbReference>
<dbReference type="SUPFAM" id="SSF81271">
    <property type="entry name" value="TGS-like"/>
    <property type="match status" value="1"/>
</dbReference>
<dbReference type="SUPFAM" id="SSF55186">
    <property type="entry name" value="ThrRS/AlaRS common domain"/>
    <property type="match status" value="1"/>
</dbReference>
<dbReference type="PROSITE" id="PS50862">
    <property type="entry name" value="AA_TRNA_LIGASE_II"/>
    <property type="match status" value="1"/>
</dbReference>
<dbReference type="PROSITE" id="PS51880">
    <property type="entry name" value="TGS"/>
    <property type="match status" value="1"/>
</dbReference>
<gene>
    <name evidence="1" type="primary">thrS</name>
    <name type="ordered locus">BPSL1945</name>
</gene>
<proteinExistence type="inferred from homology"/>
<reference key="1">
    <citation type="journal article" date="2004" name="Proc. Natl. Acad. Sci. U.S.A.">
        <title>Genomic plasticity of the causative agent of melioidosis, Burkholderia pseudomallei.</title>
        <authorList>
            <person name="Holden M.T.G."/>
            <person name="Titball R.W."/>
            <person name="Peacock S.J."/>
            <person name="Cerdeno-Tarraga A.-M."/>
            <person name="Atkins T."/>
            <person name="Crossman L.C."/>
            <person name="Pitt T."/>
            <person name="Churcher C."/>
            <person name="Mungall K.L."/>
            <person name="Bentley S.D."/>
            <person name="Sebaihia M."/>
            <person name="Thomson N.R."/>
            <person name="Bason N."/>
            <person name="Beacham I.R."/>
            <person name="Brooks K."/>
            <person name="Brown K.A."/>
            <person name="Brown N.F."/>
            <person name="Challis G.L."/>
            <person name="Cherevach I."/>
            <person name="Chillingworth T."/>
            <person name="Cronin A."/>
            <person name="Crossett B."/>
            <person name="Davis P."/>
            <person name="DeShazer D."/>
            <person name="Feltwell T."/>
            <person name="Fraser A."/>
            <person name="Hance Z."/>
            <person name="Hauser H."/>
            <person name="Holroyd S."/>
            <person name="Jagels K."/>
            <person name="Keith K.E."/>
            <person name="Maddison M."/>
            <person name="Moule S."/>
            <person name="Price C."/>
            <person name="Quail M.A."/>
            <person name="Rabbinowitsch E."/>
            <person name="Rutherford K."/>
            <person name="Sanders M."/>
            <person name="Simmonds M."/>
            <person name="Songsivilai S."/>
            <person name="Stevens K."/>
            <person name="Tumapa S."/>
            <person name="Vesaratchavest M."/>
            <person name="Whitehead S."/>
            <person name="Yeats C."/>
            <person name="Barrell B.G."/>
            <person name="Oyston P.C.F."/>
            <person name="Parkhill J."/>
        </authorList>
    </citation>
    <scope>NUCLEOTIDE SEQUENCE [LARGE SCALE GENOMIC DNA]</scope>
    <source>
        <strain>K96243</strain>
    </source>
</reference>
<feature type="chain" id="PRO_0000100954" description="Threonine--tRNA ligase">
    <location>
        <begin position="1"/>
        <end position="635"/>
    </location>
</feature>
<feature type="domain" description="TGS" evidence="2">
    <location>
        <begin position="1"/>
        <end position="61"/>
    </location>
</feature>
<feature type="region of interest" description="Catalytic" evidence="1">
    <location>
        <begin position="242"/>
        <end position="533"/>
    </location>
</feature>
<feature type="binding site" evidence="1">
    <location>
        <position position="333"/>
    </location>
    <ligand>
        <name>Zn(2+)</name>
        <dbReference type="ChEBI" id="CHEBI:29105"/>
    </ligand>
</feature>
<feature type="binding site" evidence="1">
    <location>
        <position position="384"/>
    </location>
    <ligand>
        <name>Zn(2+)</name>
        <dbReference type="ChEBI" id="CHEBI:29105"/>
    </ligand>
</feature>
<feature type="binding site" evidence="1">
    <location>
        <position position="510"/>
    </location>
    <ligand>
        <name>Zn(2+)</name>
        <dbReference type="ChEBI" id="CHEBI:29105"/>
    </ligand>
</feature>
<comment type="function">
    <text evidence="1">Catalyzes the attachment of threonine to tRNA(Thr) in a two-step reaction: L-threonine is first activated by ATP to form Thr-AMP and then transferred to the acceptor end of tRNA(Thr). Also edits incorrectly charged L-seryl-tRNA(Thr).</text>
</comment>
<comment type="catalytic activity">
    <reaction evidence="1">
        <text>tRNA(Thr) + L-threonine + ATP = L-threonyl-tRNA(Thr) + AMP + diphosphate + H(+)</text>
        <dbReference type="Rhea" id="RHEA:24624"/>
        <dbReference type="Rhea" id="RHEA-COMP:9670"/>
        <dbReference type="Rhea" id="RHEA-COMP:9704"/>
        <dbReference type="ChEBI" id="CHEBI:15378"/>
        <dbReference type="ChEBI" id="CHEBI:30616"/>
        <dbReference type="ChEBI" id="CHEBI:33019"/>
        <dbReference type="ChEBI" id="CHEBI:57926"/>
        <dbReference type="ChEBI" id="CHEBI:78442"/>
        <dbReference type="ChEBI" id="CHEBI:78534"/>
        <dbReference type="ChEBI" id="CHEBI:456215"/>
        <dbReference type="EC" id="6.1.1.3"/>
    </reaction>
</comment>
<comment type="cofactor">
    <cofactor evidence="1">
        <name>Zn(2+)</name>
        <dbReference type="ChEBI" id="CHEBI:29105"/>
    </cofactor>
    <text evidence="1">Binds 1 zinc ion per subunit.</text>
</comment>
<comment type="subunit">
    <text evidence="1">Homodimer.</text>
</comment>
<comment type="subcellular location">
    <subcellularLocation>
        <location evidence="1">Cytoplasm</location>
    </subcellularLocation>
</comment>
<comment type="similarity">
    <text evidence="1">Belongs to the class-II aminoacyl-tRNA synthetase family.</text>
</comment>
<sequence>MVSIRLPDGSVRQYEHPVTVAEVAASIGPGLAKAALGGKLDGELVDTSALIDRDASLAIVTDKDADGLDIIRHSTAHLLAYAVKELHPDAQVTIGPVIDNGFYYDFSYHRPFTPEDLEAIEKRMQELAKRDEPVTRRVVSRDEAVSYFRSIGEKYKAEIIESIPASDEIKLYSHGSFTDLCRGPHVPSTGKLKVFKLMKVAGAYWRGDSKNEQLQRIYGTAWTRKEDQDAYLHMLEEAEKRDHRKLGKQLDLFHIQEEAPGMVFWHPKGWTLWQQVEQYMRRRLDAAGYLEIKTPMIMDRSLWEASGHWQNYRENMFTTESEKRDYAIKPMNCPGHVQVFKHGLRSYRDLPLRYAEFGSCHRNEASGALHGLMRVRGFVQDDAHIFCTEDQINSEAIAFNKLAMSVYEDFGFDRIDIKLSLRPEQRMGSDETWDHAEEGLRNALKACGLEWEELPGEGAFYGPKIEYHIKDALGRSWQCGTLQLDMMLPERLGAEYVAEDNSRRRPVMLHRAIVGSMERFLGILIEHHAGAMPVWLAPAHAVVLNIAESQAEYARTVAQSLQKQGLRVSADLRNEKISYKIREHTLEKVPYLLVVGDKEREAQTVAVRARGGVDLGVMPVEAFVERLREDIQAFK</sequence>
<accession>Q63TM2</accession>
<organism>
    <name type="scientific">Burkholderia pseudomallei (strain K96243)</name>
    <dbReference type="NCBI Taxonomy" id="272560"/>
    <lineage>
        <taxon>Bacteria</taxon>
        <taxon>Pseudomonadati</taxon>
        <taxon>Pseudomonadota</taxon>
        <taxon>Betaproteobacteria</taxon>
        <taxon>Burkholderiales</taxon>
        <taxon>Burkholderiaceae</taxon>
        <taxon>Burkholderia</taxon>
        <taxon>pseudomallei group</taxon>
    </lineage>
</organism>
<keyword id="KW-0030">Aminoacyl-tRNA synthetase</keyword>
<keyword id="KW-0067">ATP-binding</keyword>
<keyword id="KW-0963">Cytoplasm</keyword>
<keyword id="KW-0436">Ligase</keyword>
<keyword id="KW-0479">Metal-binding</keyword>
<keyword id="KW-0547">Nucleotide-binding</keyword>
<keyword id="KW-0648">Protein biosynthesis</keyword>
<keyword id="KW-1185">Reference proteome</keyword>
<keyword id="KW-0694">RNA-binding</keyword>
<keyword id="KW-0820">tRNA-binding</keyword>
<keyword id="KW-0862">Zinc</keyword>
<evidence type="ECO:0000255" key="1">
    <source>
        <dbReference type="HAMAP-Rule" id="MF_00184"/>
    </source>
</evidence>
<evidence type="ECO:0000255" key="2">
    <source>
        <dbReference type="PROSITE-ProRule" id="PRU01228"/>
    </source>
</evidence>
<protein>
    <recommendedName>
        <fullName evidence="1">Threonine--tRNA ligase</fullName>
        <ecNumber evidence="1">6.1.1.3</ecNumber>
    </recommendedName>
    <alternativeName>
        <fullName evidence="1">Threonyl-tRNA synthetase</fullName>
        <shortName evidence="1">ThrRS</shortName>
    </alternativeName>
</protein>
<name>SYT_BURPS</name>